<sequence length="492" mass="53802">MRLYDLTAHRLRELLLGREVSAAELCRSVLNRIDEVEGRVKAYVTLDREGALRQAAAVDRELQNGRELPPLAGIPFAIKDNICLRGLPATCSSKILHNWVPPYDATVVEKLKDQQTVILGKTNMDEFAMGSSTEHSAFFTTRNPWDPKRVPGGSSGGSAAAVAAGSAICALGSDTGGSIRQPASFCGVVGMKPTYGLVSRYGLVAFASSLDQIGPLTRDVTDCALVMNAICGHDHRDSTSVPKEVPDFTSFLVDDVKGMRIGLPREYFPAELDDGVRRIVMEAVSVFEERGAYVEETSLPHTEYALPVYYLIAPAEASSNLARYDGVRYGYRAPECEDVLDMFRVSRSRGFGAEVKRRIMLGTYALSAGYYDAYYLKALKVRTLIRRDFEEAFEKFDVLLSPTAPETAFIIGAKTEDPIRMYLSDIFTLAVNLAGLPGMSVPAGFVAGLPVGIQFIGKPFAEGTLLRMGYAFQQSTDHHRQRPPETPGGEIS</sequence>
<proteinExistence type="inferred from homology"/>
<organism>
    <name type="scientific">Desulforudis audaxviator (strain MP104C)</name>
    <dbReference type="NCBI Taxonomy" id="477974"/>
    <lineage>
        <taxon>Bacteria</taxon>
        <taxon>Bacillati</taxon>
        <taxon>Bacillota</taxon>
        <taxon>Clostridia</taxon>
        <taxon>Thermoanaerobacterales</taxon>
        <taxon>Candidatus Desulforudaceae</taxon>
        <taxon>Candidatus Desulforudis</taxon>
    </lineage>
</organism>
<name>GATA_DESAP</name>
<feature type="chain" id="PRO_1000095131" description="Glutamyl-tRNA(Gln) amidotransferase subunit A">
    <location>
        <begin position="1"/>
        <end position="492"/>
    </location>
</feature>
<feature type="active site" description="Charge relay system" evidence="1">
    <location>
        <position position="79"/>
    </location>
</feature>
<feature type="active site" description="Charge relay system" evidence="1">
    <location>
        <position position="154"/>
    </location>
</feature>
<feature type="active site" description="Acyl-ester intermediate" evidence="1">
    <location>
        <position position="178"/>
    </location>
</feature>
<evidence type="ECO:0000255" key="1">
    <source>
        <dbReference type="HAMAP-Rule" id="MF_00120"/>
    </source>
</evidence>
<reference key="1">
    <citation type="submission" date="2007-10" db="EMBL/GenBank/DDBJ databases">
        <title>Complete sequence of chromosome of Desulforudis audaxviator MP104C.</title>
        <authorList>
            <person name="Copeland A."/>
            <person name="Lucas S."/>
            <person name="Lapidus A."/>
            <person name="Barry K."/>
            <person name="Glavina del Rio T."/>
            <person name="Dalin E."/>
            <person name="Tice H."/>
            <person name="Bruce D."/>
            <person name="Pitluck S."/>
            <person name="Lowry S.R."/>
            <person name="Larimer F."/>
            <person name="Land M.L."/>
            <person name="Hauser L."/>
            <person name="Kyrpides N."/>
            <person name="Ivanova N.N."/>
            <person name="Richardson P."/>
        </authorList>
    </citation>
    <scope>NUCLEOTIDE SEQUENCE [LARGE SCALE GENOMIC DNA]</scope>
    <source>
        <strain>MP104C</strain>
    </source>
</reference>
<dbReference type="EC" id="6.3.5.7" evidence="1"/>
<dbReference type="EMBL" id="CP000860">
    <property type="protein sequence ID" value="ACA59545.1"/>
    <property type="molecule type" value="Genomic_DNA"/>
</dbReference>
<dbReference type="RefSeq" id="WP_012302131.1">
    <property type="nucleotide sequence ID" value="NC_010424.1"/>
</dbReference>
<dbReference type="SMR" id="B1I3K2"/>
<dbReference type="STRING" id="477974.Daud_1033"/>
<dbReference type="KEGG" id="dau:Daud_1033"/>
<dbReference type="eggNOG" id="COG0154">
    <property type="taxonomic scope" value="Bacteria"/>
</dbReference>
<dbReference type="HOGENOM" id="CLU_009600_0_3_9"/>
<dbReference type="OrthoDB" id="9811471at2"/>
<dbReference type="Proteomes" id="UP000008544">
    <property type="component" value="Chromosome"/>
</dbReference>
<dbReference type="GO" id="GO:0030956">
    <property type="term" value="C:glutamyl-tRNA(Gln) amidotransferase complex"/>
    <property type="evidence" value="ECO:0007669"/>
    <property type="project" value="InterPro"/>
</dbReference>
<dbReference type="GO" id="GO:0005524">
    <property type="term" value="F:ATP binding"/>
    <property type="evidence" value="ECO:0007669"/>
    <property type="project" value="UniProtKB-KW"/>
</dbReference>
<dbReference type="GO" id="GO:0050567">
    <property type="term" value="F:glutaminyl-tRNA synthase (glutamine-hydrolyzing) activity"/>
    <property type="evidence" value="ECO:0007669"/>
    <property type="project" value="UniProtKB-UniRule"/>
</dbReference>
<dbReference type="GO" id="GO:0006412">
    <property type="term" value="P:translation"/>
    <property type="evidence" value="ECO:0007669"/>
    <property type="project" value="UniProtKB-UniRule"/>
</dbReference>
<dbReference type="Gene3D" id="3.90.1300.10">
    <property type="entry name" value="Amidase signature (AS) domain"/>
    <property type="match status" value="1"/>
</dbReference>
<dbReference type="HAMAP" id="MF_00120">
    <property type="entry name" value="GatA"/>
    <property type="match status" value="1"/>
</dbReference>
<dbReference type="InterPro" id="IPR000120">
    <property type="entry name" value="Amidase"/>
</dbReference>
<dbReference type="InterPro" id="IPR020556">
    <property type="entry name" value="Amidase_CS"/>
</dbReference>
<dbReference type="InterPro" id="IPR023631">
    <property type="entry name" value="Amidase_dom"/>
</dbReference>
<dbReference type="InterPro" id="IPR036928">
    <property type="entry name" value="AS_sf"/>
</dbReference>
<dbReference type="InterPro" id="IPR004412">
    <property type="entry name" value="GatA"/>
</dbReference>
<dbReference type="NCBIfam" id="TIGR00132">
    <property type="entry name" value="gatA"/>
    <property type="match status" value="1"/>
</dbReference>
<dbReference type="PANTHER" id="PTHR11895:SF151">
    <property type="entry name" value="GLUTAMYL-TRNA(GLN) AMIDOTRANSFERASE SUBUNIT A"/>
    <property type="match status" value="1"/>
</dbReference>
<dbReference type="PANTHER" id="PTHR11895">
    <property type="entry name" value="TRANSAMIDASE"/>
    <property type="match status" value="1"/>
</dbReference>
<dbReference type="Pfam" id="PF01425">
    <property type="entry name" value="Amidase"/>
    <property type="match status" value="1"/>
</dbReference>
<dbReference type="SUPFAM" id="SSF75304">
    <property type="entry name" value="Amidase signature (AS) enzymes"/>
    <property type="match status" value="1"/>
</dbReference>
<dbReference type="PROSITE" id="PS00571">
    <property type="entry name" value="AMIDASES"/>
    <property type="match status" value="1"/>
</dbReference>
<keyword id="KW-0067">ATP-binding</keyword>
<keyword id="KW-0436">Ligase</keyword>
<keyword id="KW-0547">Nucleotide-binding</keyword>
<keyword id="KW-0648">Protein biosynthesis</keyword>
<keyword id="KW-1185">Reference proteome</keyword>
<comment type="function">
    <text evidence="1">Allows the formation of correctly charged Gln-tRNA(Gln) through the transamidation of misacylated Glu-tRNA(Gln) in organisms which lack glutaminyl-tRNA synthetase. The reaction takes place in the presence of glutamine and ATP through an activated gamma-phospho-Glu-tRNA(Gln).</text>
</comment>
<comment type="catalytic activity">
    <reaction evidence="1">
        <text>L-glutamyl-tRNA(Gln) + L-glutamine + ATP + H2O = L-glutaminyl-tRNA(Gln) + L-glutamate + ADP + phosphate + H(+)</text>
        <dbReference type="Rhea" id="RHEA:17521"/>
        <dbReference type="Rhea" id="RHEA-COMP:9681"/>
        <dbReference type="Rhea" id="RHEA-COMP:9684"/>
        <dbReference type="ChEBI" id="CHEBI:15377"/>
        <dbReference type="ChEBI" id="CHEBI:15378"/>
        <dbReference type="ChEBI" id="CHEBI:29985"/>
        <dbReference type="ChEBI" id="CHEBI:30616"/>
        <dbReference type="ChEBI" id="CHEBI:43474"/>
        <dbReference type="ChEBI" id="CHEBI:58359"/>
        <dbReference type="ChEBI" id="CHEBI:78520"/>
        <dbReference type="ChEBI" id="CHEBI:78521"/>
        <dbReference type="ChEBI" id="CHEBI:456216"/>
        <dbReference type="EC" id="6.3.5.7"/>
    </reaction>
</comment>
<comment type="subunit">
    <text evidence="1">Heterotrimer of A, B and C subunits.</text>
</comment>
<comment type="similarity">
    <text evidence="1">Belongs to the amidase family. GatA subfamily.</text>
</comment>
<gene>
    <name evidence="1" type="primary">gatA</name>
    <name type="ordered locus">Daud_1033</name>
</gene>
<protein>
    <recommendedName>
        <fullName evidence="1">Glutamyl-tRNA(Gln) amidotransferase subunit A</fullName>
        <shortName evidence="1">Glu-ADT subunit A</shortName>
        <ecNumber evidence="1">6.3.5.7</ecNumber>
    </recommendedName>
</protein>
<accession>B1I3K2</accession>